<reference key="1">
    <citation type="journal article" date="2003" name="Genome Res.">
        <title>Comparative complete genome sequence analysis of the amino acid replacements responsible for the thermostability of Corynebacterium efficiens.</title>
        <authorList>
            <person name="Nishio Y."/>
            <person name="Nakamura Y."/>
            <person name="Kawarabayasi Y."/>
            <person name="Usuda Y."/>
            <person name="Kimura E."/>
            <person name="Sugimoto S."/>
            <person name="Matsui K."/>
            <person name="Yamagishi A."/>
            <person name="Kikuchi H."/>
            <person name="Ikeo K."/>
            <person name="Gojobori T."/>
        </authorList>
    </citation>
    <scope>NUCLEOTIDE SEQUENCE [LARGE SCALE GENOMIC DNA]</scope>
    <source>
        <strain>DSM 44549 / YS-314 / AJ 12310 / JCM 11189 / NBRC 100395</strain>
    </source>
</reference>
<feature type="chain" id="PRO_0000126400" description="Small ribosomal subunit protein uS8">
    <location>
        <begin position="1"/>
        <end position="132"/>
    </location>
</feature>
<sequence>MTMTDPIADMLSRVRNANNAHHDTVSMPSSKLKANIAEILKQEGYIESYTVEDAKVGKTLTLELKYTGNRVRSIAGLRRVSKPGLRVYAKSTNLPQVLGGLGVAIISTSQGLLTDRQATEKGVGGEVLAYVW</sequence>
<keyword id="KW-1185">Reference proteome</keyword>
<keyword id="KW-0687">Ribonucleoprotein</keyword>
<keyword id="KW-0689">Ribosomal protein</keyword>
<keyword id="KW-0694">RNA-binding</keyword>
<keyword id="KW-0699">rRNA-binding</keyword>
<proteinExistence type="inferred from homology"/>
<comment type="function">
    <text evidence="1">One of the primary rRNA binding proteins, it binds directly to 16S rRNA central domain where it helps coordinate assembly of the platform of the 30S subunit.</text>
</comment>
<comment type="subunit">
    <text evidence="1">Part of the 30S ribosomal subunit. Contacts proteins S5 and S12.</text>
</comment>
<comment type="similarity">
    <text evidence="1">Belongs to the universal ribosomal protein uS8 family.</text>
</comment>
<name>RS8_COREF</name>
<accession>Q8FS55</accession>
<protein>
    <recommendedName>
        <fullName evidence="1">Small ribosomal subunit protein uS8</fullName>
    </recommendedName>
    <alternativeName>
        <fullName evidence="2">30S ribosomal protein S8</fullName>
    </alternativeName>
</protein>
<gene>
    <name evidence="1" type="primary">rpsH</name>
    <name type="ordered locus">CE0549</name>
</gene>
<dbReference type="EMBL" id="BA000035">
    <property type="protein sequence ID" value="BAC17359.1"/>
    <property type="molecule type" value="Genomic_DNA"/>
</dbReference>
<dbReference type="RefSeq" id="WP_006769777.1">
    <property type="nucleotide sequence ID" value="NC_004369.1"/>
</dbReference>
<dbReference type="SMR" id="Q8FS55"/>
<dbReference type="STRING" id="196164.gene:10740951"/>
<dbReference type="KEGG" id="cef:CE0549"/>
<dbReference type="eggNOG" id="COG0096">
    <property type="taxonomic scope" value="Bacteria"/>
</dbReference>
<dbReference type="HOGENOM" id="CLU_098428_0_1_11"/>
<dbReference type="OrthoDB" id="9802617at2"/>
<dbReference type="Proteomes" id="UP000001409">
    <property type="component" value="Chromosome"/>
</dbReference>
<dbReference type="GO" id="GO:1990904">
    <property type="term" value="C:ribonucleoprotein complex"/>
    <property type="evidence" value="ECO:0007669"/>
    <property type="project" value="UniProtKB-KW"/>
</dbReference>
<dbReference type="GO" id="GO:0005840">
    <property type="term" value="C:ribosome"/>
    <property type="evidence" value="ECO:0007669"/>
    <property type="project" value="UniProtKB-KW"/>
</dbReference>
<dbReference type="GO" id="GO:0019843">
    <property type="term" value="F:rRNA binding"/>
    <property type="evidence" value="ECO:0007669"/>
    <property type="project" value="UniProtKB-UniRule"/>
</dbReference>
<dbReference type="GO" id="GO:0003735">
    <property type="term" value="F:structural constituent of ribosome"/>
    <property type="evidence" value="ECO:0007669"/>
    <property type="project" value="InterPro"/>
</dbReference>
<dbReference type="GO" id="GO:0006412">
    <property type="term" value="P:translation"/>
    <property type="evidence" value="ECO:0007669"/>
    <property type="project" value="UniProtKB-UniRule"/>
</dbReference>
<dbReference type="FunFam" id="3.30.1370.30:FF:000002">
    <property type="entry name" value="30S ribosomal protein S8"/>
    <property type="match status" value="1"/>
</dbReference>
<dbReference type="FunFam" id="3.30.1490.10:FF:000001">
    <property type="entry name" value="30S ribosomal protein S8"/>
    <property type="match status" value="1"/>
</dbReference>
<dbReference type="Gene3D" id="3.30.1370.30">
    <property type="match status" value="1"/>
</dbReference>
<dbReference type="Gene3D" id="3.30.1490.10">
    <property type="match status" value="1"/>
</dbReference>
<dbReference type="HAMAP" id="MF_01302_B">
    <property type="entry name" value="Ribosomal_uS8_B"/>
    <property type="match status" value="1"/>
</dbReference>
<dbReference type="InterPro" id="IPR000630">
    <property type="entry name" value="Ribosomal_uS8"/>
</dbReference>
<dbReference type="InterPro" id="IPR035987">
    <property type="entry name" value="Ribosomal_uS8_sf"/>
</dbReference>
<dbReference type="NCBIfam" id="NF001109">
    <property type="entry name" value="PRK00136.1"/>
    <property type="match status" value="1"/>
</dbReference>
<dbReference type="PANTHER" id="PTHR11758">
    <property type="entry name" value="40S RIBOSOMAL PROTEIN S15A"/>
    <property type="match status" value="1"/>
</dbReference>
<dbReference type="Pfam" id="PF00410">
    <property type="entry name" value="Ribosomal_S8"/>
    <property type="match status" value="1"/>
</dbReference>
<dbReference type="SUPFAM" id="SSF56047">
    <property type="entry name" value="Ribosomal protein S8"/>
    <property type="match status" value="1"/>
</dbReference>
<organism>
    <name type="scientific">Corynebacterium efficiens (strain DSM 44549 / YS-314 / AJ 12310 / JCM 11189 / NBRC 100395)</name>
    <dbReference type="NCBI Taxonomy" id="196164"/>
    <lineage>
        <taxon>Bacteria</taxon>
        <taxon>Bacillati</taxon>
        <taxon>Actinomycetota</taxon>
        <taxon>Actinomycetes</taxon>
        <taxon>Mycobacteriales</taxon>
        <taxon>Corynebacteriaceae</taxon>
        <taxon>Corynebacterium</taxon>
    </lineage>
</organism>
<evidence type="ECO:0000255" key="1">
    <source>
        <dbReference type="HAMAP-Rule" id="MF_01302"/>
    </source>
</evidence>
<evidence type="ECO:0000305" key="2"/>